<reference key="1">
    <citation type="journal article" date="1997" name="FEBS Lett.">
        <title>Sequence of a putative glucose 6-phosphate translocase, mutated in glycogen storage disease type Ib.</title>
        <authorList>
            <person name="Gerin I."/>
            <person name="Veiga-Da-Cunha M."/>
            <person name="Achouri Y."/>
            <person name="Collet J.-F."/>
            <person name="van Schaftingen E."/>
        </authorList>
    </citation>
    <scope>NUCLEOTIDE SEQUENCE [MRNA] (ISOFORM 1)</scope>
    <scope>VARIANT GSD1B CYS-339</scope>
    <source>
        <tissue>Urinary bladder</tissue>
    </source>
</reference>
<reference key="2">
    <citation type="journal article" date="1998" name="Hum. Genet.">
        <title>Genomic structure of the human glucose 6-phosphate translocase gene and novel mutations in the gene of a Japanese patient with glycogen storage disease type Ib.</title>
        <authorList>
            <person name="Ihara K."/>
            <person name="Kuromaru R."/>
            <person name="Hara T."/>
        </authorList>
    </citation>
    <scope>NUCLEOTIDE SEQUENCE [GENOMIC DNA] (ISOFORM 1)</scope>
    <scope>VARIANT GSD1B ARG-118</scope>
</reference>
<reference key="3">
    <citation type="journal article" date="1999" name="J. Biol. Chem.">
        <title>Inactivation of the glucose 6-phosphate transporter causes glycogen storage disease type 1b.</title>
        <authorList>
            <person name="Hiraiwa H."/>
            <person name="Pan C.-J."/>
            <person name="Lin B."/>
            <person name="Moses S.W."/>
            <person name="Chou J.Y."/>
        </authorList>
    </citation>
    <scope>NUCLEOTIDE SEQUENCE [GENOMIC DNA]</scope>
    <scope>FUNCTION</scope>
    <scope>TRANSPORTER ACTIVITY</scope>
    <scope>VARIANTS GSD1B HIS-28; GLU-149 AND ARG-183</scope>
    <scope>CHARACTERIZATION OF VARIANTS GSD1B HIS-28; GLU-149 AND ARG-183</scope>
    <source>
        <tissue>Liver</tissue>
    </source>
</reference>
<reference key="4">
    <citation type="submission" date="1998-12" db="EMBL/GenBank/DDBJ databases">
        <title>Functional prediction of the coding sequences of 9 new genes deduced by analysis of cDNA clones from human fetal liver.</title>
        <authorList>
            <person name="Zhang C."/>
            <person name="Yu Y."/>
            <person name="Zhang S."/>
            <person name="Ouyang S."/>
            <person name="Luo L."/>
            <person name="Wei H."/>
            <person name="Zhou G."/>
            <person name="Zhang Y."/>
            <person name="Liu M."/>
            <person name="He F."/>
        </authorList>
    </citation>
    <scope>NUCLEOTIDE SEQUENCE [LARGE SCALE MRNA] (ISOFORM 1)</scope>
    <source>
        <tissue>Fetal liver</tissue>
    </source>
</reference>
<reference key="5">
    <citation type="submission" date="1998-12" db="EMBL/GenBank/DDBJ databases">
        <title>Four different transcripts of putative glucose-6-phosphate translocase in human leukocytes.</title>
        <authorList>
            <person name="Li Y."/>
            <person name="van de Werve G."/>
        </authorList>
    </citation>
    <scope>NUCLEOTIDE SEQUENCE [MRNA] (ISOFORMS 1 AND 2)</scope>
</reference>
<reference key="6">
    <citation type="journal article" date="1999" name="Gene">
        <title>Structure of the gene mutated in glycogen storage disease type Ib.</title>
        <authorList>
            <person name="Gerin I."/>
            <person name="Veiga-Da-Cunha M."/>
            <person name="Noel G."/>
            <person name="Van Schaftingen E."/>
        </authorList>
    </citation>
    <scope>NUCLEOTIDE SEQUENCE [GENOMIC DNA]</scope>
    <scope>ALTERNATIVE SPLICING</scope>
</reference>
<reference key="7">
    <citation type="journal article" date="1999" name="Hum. Genet.">
        <title>Molecular diagnosis of type 1c glycogen storage disease.</title>
        <authorList>
            <person name="Janecke A.R."/>
            <person name="Bosshard N.U."/>
            <person name="Mayatepek E."/>
            <person name="Schulze A."/>
            <person name="Gitzelmann R."/>
            <person name="Burchell A."/>
            <person name="Bartram C.R."/>
            <person name="Janssen B."/>
        </authorList>
    </citation>
    <scope>NUCLEOTIDE SEQUENCE [GENOMIC DNA]</scope>
</reference>
<reference key="8">
    <citation type="submission" date="2003-09" db="EMBL/GenBank/DDBJ databases">
        <title>Identification of a human transformation gene.</title>
        <authorList>
            <person name="Kim J.W."/>
        </authorList>
    </citation>
    <scope>NUCLEOTIDE SEQUENCE [LARGE SCALE MRNA] (ISOFORM 1)</scope>
</reference>
<reference key="9">
    <citation type="submission" date="2005-07" db="EMBL/GenBank/DDBJ databases">
        <authorList>
            <person name="Mural R.J."/>
            <person name="Istrail S."/>
            <person name="Sutton G.G."/>
            <person name="Florea L."/>
            <person name="Halpern A.L."/>
            <person name="Mobarry C.M."/>
            <person name="Lippert R."/>
            <person name="Walenz B."/>
            <person name="Shatkay H."/>
            <person name="Dew I."/>
            <person name="Miller J.R."/>
            <person name="Flanigan M.J."/>
            <person name="Edwards N.J."/>
            <person name="Bolanos R."/>
            <person name="Fasulo D."/>
            <person name="Halldorsson B.V."/>
            <person name="Hannenhalli S."/>
            <person name="Turner R."/>
            <person name="Yooseph S."/>
            <person name="Lu F."/>
            <person name="Nusskern D.R."/>
            <person name="Shue B.C."/>
            <person name="Zheng X.H."/>
            <person name="Zhong F."/>
            <person name="Delcher A.L."/>
            <person name="Huson D.H."/>
            <person name="Kravitz S.A."/>
            <person name="Mouchard L."/>
            <person name="Reinert K."/>
            <person name="Remington K.A."/>
            <person name="Clark A.G."/>
            <person name="Waterman M.S."/>
            <person name="Eichler E.E."/>
            <person name="Adams M.D."/>
            <person name="Hunkapiller M.W."/>
            <person name="Myers E.W."/>
            <person name="Venter J.C."/>
        </authorList>
    </citation>
    <scope>NUCLEOTIDE SEQUENCE [LARGE SCALE GENOMIC DNA]</scope>
</reference>
<reference key="10">
    <citation type="journal article" date="2004" name="Genome Res.">
        <title>The status, quality, and expansion of the NIH full-length cDNA project: the Mammalian Gene Collection (MGC).</title>
        <authorList>
            <consortium name="The MGC Project Team"/>
        </authorList>
    </citation>
    <scope>NUCLEOTIDE SEQUENCE [LARGE SCALE MRNA] (ISOFORM 1)</scope>
    <source>
        <tissue>Colon</tissue>
        <tissue>Eye</tissue>
        <tissue>Lung</tissue>
    </source>
</reference>
<reference key="11">
    <citation type="journal article" date="2011" name="PLoS ONE">
        <title>SLC37A1 and SLC37A2 are phosphate-linked, glucose-6-phosphate antiporters.</title>
        <authorList>
            <person name="Pan C.J."/>
            <person name="Chen S.Y."/>
            <person name="Jun H.S."/>
            <person name="Lin S.R."/>
            <person name="Mansfield B.C."/>
            <person name="Chou J.Y."/>
        </authorList>
    </citation>
    <scope>FUNCTION</scope>
    <scope>SUBCELLULAR LOCATION</scope>
    <scope>ACTIVITY REGULATION</scope>
    <scope>TRANSPORTER ACTIVITY</scope>
</reference>
<reference key="12">
    <citation type="journal article" date="2002" name="Curr. Mol. Med.">
        <title>Type I glycogen storage diseases: disorders of the glucose-6-phosphatase complex.</title>
        <authorList>
            <person name="Chou J.Y."/>
            <person name="Matern D."/>
            <person name="Mansfield B.C."/>
            <person name="Chen Y.-T."/>
        </authorList>
    </citation>
    <scope>REVIEW ON GSD1B VARIANTS</scope>
    <scope>VARIANTS GSD1B HIS-28; PRO-85; ASN-278; ASP-339 AND ASP-373</scope>
</reference>
<reference key="13">
    <citation type="journal article" date="1998" name="Am. J. Hum. Genet.">
        <title>A gene on chromosome 11q23 coding for a putative glucose-6-phosphate translocase is mutated in glycogen-storage disease types Ib and Ic.</title>
        <authorList>
            <person name="Veiga-da-Cunha M."/>
            <person name="Gerin I."/>
            <person name="Chen Y.-T."/>
            <person name="de Barsy T."/>
            <person name="de Lonlay P."/>
            <person name="Dionisi-Vici C."/>
            <person name="Fenske C.D."/>
            <person name="Lee P.J."/>
            <person name="Leonard J.V."/>
            <person name="Maire I."/>
            <person name="McConkie-Rosell A."/>
            <person name="Schweitzer S."/>
            <person name="Vikkula M."/>
            <person name="Van Schaftingen E."/>
        </authorList>
    </citation>
    <scope>VARIANTS GSD1B ASP-20; CYS-28; ARG-55; ARG-68; ASP-88 AND ARG-150</scope>
    <scope>VARIANT ILE-198</scope>
    <scope>INVOLVEMENT IN GSD1C AND GSD1D</scope>
</reference>
<reference key="14">
    <citation type="journal article" date="1998" name="FEBS Lett.">
        <title>Structure and mutation analysis of the glycogen storage disease type 1b gene.</title>
        <authorList>
            <person name="Marcolongo P."/>
            <person name="Barone V."/>
            <person name="Priori G."/>
            <person name="Pirola B."/>
            <person name="Giglio S."/>
            <person name="Biasucci G."/>
            <person name="Zammarchi E."/>
            <person name="Parenti G."/>
            <person name="Burchell A."/>
            <person name="Benedetti A."/>
            <person name="Sorrentino V."/>
        </authorList>
    </citation>
    <scope>VARIANT GSD1B HIS-300</scope>
</reference>
<reference key="15">
    <citation type="journal article" date="1999" name="FEBS Lett.">
        <authorList>
            <person name="Marcolongo P."/>
            <person name="Barone V."/>
            <person name="Priori G."/>
            <person name="Giglio S."/>
            <person name="Benedetti A."/>
            <person name="Sorrentino V."/>
        </authorList>
    </citation>
    <scope>ERRATUM OF PUBMED:9781688</scope>
</reference>
<reference key="16">
    <citation type="journal article" date="1999" name="Eur. J. Hum. Genet.">
        <title>The putative glucose 6-phosphate translocase gene is mutated in essentially all cases of glycogen storage disease type I non-a.</title>
        <authorList>
            <person name="Veiga-da-Cunha M."/>
            <person name="Gerin I."/>
            <person name="Chen Y.-T."/>
            <person name="Lee P.J."/>
            <person name="Leonard J.V."/>
            <person name="Maire I."/>
            <person name="Wendel U."/>
            <person name="Vikkula M."/>
            <person name="Van Schaftingen E."/>
        </authorList>
    </citation>
    <scope>VARIANTS GSD1B ARG-50; ARG-176; ARG-183 AND CYS-300</scope>
    <scope>VARIANTS GSD1C PRO-133 AND SER-376</scope>
</reference>
<reference key="17">
    <citation type="journal article" date="1999" name="FEBS Lett.">
        <title>Mutations in the glucose-6-phosphate transporter (G6PT) gene in patients with glycogen storage diseases type 1b and 1c.</title>
        <authorList>
            <person name="Galli L."/>
            <person name="Orrico A."/>
            <person name="Marcolongo P."/>
            <person name="Fulceri R."/>
            <person name="Burchell A."/>
            <person name="Melis D."/>
            <person name="Parini R."/>
            <person name="Gatti R."/>
            <person name="Lam C.-W."/>
            <person name="Benedetti A."/>
            <person name="Sorrentino V."/>
        </authorList>
    </citation>
    <scope>VARIANT GSD1B THR-367</scope>
</reference>
<reference key="18">
    <citation type="journal article" date="1998" name="Biochem. Biophys. Res. Commun.">
        <title>Molecular analysis of glycogen storage disease type Ib: identification of a prevalent mutation among Japanese patients and assignment of a putative glucose-6-phosphate translocase gene to chromosome 11.</title>
        <authorList>
            <person name="Kure S."/>
            <person name="Suzuki Y."/>
            <person name="Matsubara Y."/>
            <person name="Sakamoto O."/>
            <person name="Shintaku H."/>
            <person name="Isshiki G."/>
            <person name="Hoshida C."/>
            <person name="Izumi I."/>
            <person name="Sakura N."/>
            <person name="Narisawa K."/>
        </authorList>
    </citation>
    <scope>VARIANT GSD1B ARG-118</scope>
</reference>
<reference key="19">
    <citation type="journal article" date="1999" name="Am. J. Med. Genet.">
        <title>Glycogen storage disease type Ib: structural and mutational analysis of the microsomal glucose-6-phosphate transporter gene.</title>
        <authorList>
            <person name="Hou D.-C."/>
            <person name="Kure S."/>
            <person name="Suzuki Y."/>
            <person name="Hasegawa Y."/>
            <person name="Hara Y."/>
            <person name="Inoue T."/>
            <person name="Kida Y."/>
            <person name="Matsubara Y."/>
            <person name="Narisawa K."/>
        </authorList>
    </citation>
    <scope>VARIANTS GSD1B ARG-118 AND VAL-235 DEL</scope>
</reference>
<reference key="20">
    <citation type="journal article" date="1999" name="Hum. Mutat.">
        <title>Identification of a novel missense mutation (G149E) in the glucose-6-phosphate translocase gene in a Chinese family with glycogen storage disease 1b.</title>
        <authorList>
            <person name="Lam C.-W."/>
            <person name="Tong S.-F."/>
            <person name="Lam Y.-Y."/>
            <person name="Chan B.-Y."/>
            <person name="Ma C.-H."/>
            <person name="Lim P.-L."/>
        </authorList>
    </citation>
    <scope>VARIANT GSD1B GLU-149</scope>
</reference>
<reference key="21">
    <citation type="journal article" date="2000" name="Hum. Genet.">
        <title>Mutation analysis in glycogen storage disease type 1 non-a.</title>
        <authorList>
            <person name="Janecke A.R."/>
            <person name="Lindner M."/>
            <person name="Erdel M."/>
            <person name="Mayatepek E."/>
            <person name="Moeslinger D."/>
            <person name="Podskarbi T."/>
            <person name="Fresser F."/>
            <person name="Stoeckler-Ipsiroglu S."/>
            <person name="Hoffmann G.F."/>
            <person name="Utermann G."/>
        </authorList>
    </citation>
    <scope>VARIANT GSD1B ARG-54</scope>
</reference>
<reference key="22">
    <citation type="journal article" date="2000" name="Hum. Mutat.">
        <title>A novel missense mutation (P191L) in the glucose-6-phosphate translocase gene identified in a Chinese family with glycogen storage disease 1b.</title>
        <authorList>
            <person name="Lam C.-W."/>
            <person name="Chan K.-Y."/>
            <person name="Tong S.-F."/>
            <person name="Chan B.Y."/>
            <person name="Chan Y.-T."/>
            <person name="Chan Y.-W."/>
        </authorList>
    </citation>
    <scope>VARIANT GSD1B LEU-191</scope>
</reference>
<reference key="23">
    <citation type="journal article" date="2000" name="Hum. Mutat.">
        <title>Molecular analysis in glycogen storage disease 1 non-A: DHPLC detection of the highly prevalent exon 8 mutations of the G6PT1 gene in German patients.</title>
        <authorList>
            <person name="Santer R."/>
            <person name="Rischewski J."/>
            <person name="Block G."/>
            <person name="Kinner M."/>
            <person name="Wendel U."/>
            <person name="Schaub J."/>
            <person name="Schneppenheim R."/>
        </authorList>
    </citation>
    <scope>VARIANTS GSD1B LYS-27; LEU-153 AND PRO-301</scope>
</reference>
<reference key="24">
    <citation type="journal article" date="2000" name="J. Pediatr.">
        <title>Glycogen storage disease type Ib without neutropenia.</title>
        <authorList>
            <person name="Kure S."/>
            <person name="Hou D.-C."/>
            <person name="Suzuki Y."/>
            <person name="Yamagishi A."/>
            <person name="Hiratsuka M."/>
            <person name="Fukuda T."/>
            <person name="Sugie H."/>
            <person name="Kondo N."/>
            <person name="Matsubara Y."/>
            <person name="Narisawa K."/>
        </authorList>
    </citation>
    <scope>VARIANT GSD1B ASP-339</scope>
</reference>
<reference key="25">
    <citation type="journal article" date="2002" name="Mol. Genet. Metab.">
        <title>Novel missense mutation (Y24H) in the G6PT1 gene causing glycogen storage disease type 1b.</title>
        <authorList>
            <person name="Yuen Y.-P."/>
            <person name="Cheng W.-F."/>
            <person name="Tong S.-F."/>
            <person name="Chan Y.-T."/>
            <person name="Chan Y.-W."/>
            <person name="Lam C.-W."/>
        </authorList>
    </citation>
    <scope>VARIANT GSD1B HIS-24</scope>
</reference>
<reference key="26">
    <citation type="journal article" date="2004" name="J. Inherit. Metab. Dis.">
        <title>Allelic heterogeneity of glycogen storage disease type Ib in French patients: a study of 11 cases.</title>
        <authorList>
            <person name="Trioche P."/>
            <person name="Petit F."/>
            <person name="Francoual J."/>
            <person name="Gajdos V."/>
            <person name="Capel L."/>
            <person name="Poues C."/>
            <person name="Labrune P."/>
        </authorList>
    </citation>
    <scope>VARIANT GSD1B PRO-229</scope>
</reference>
<reference key="27">
    <citation type="journal article" date="2004" name="Mol. Genet. Metab.">
        <title>Genetic testing of glycogen storage disease type Ib in Japan: five novel G6PT1 mutations and a rapid detection method for a prevalent mutation W118R.</title>
        <authorList>
            <person name="Kojima K."/>
            <person name="Kure S."/>
            <person name="Kamada F."/>
            <person name="Hao K."/>
            <person name="Ichinohe A."/>
            <person name="Sato K."/>
            <person name="Aoki Y."/>
            <person name="Yoichi S."/>
            <person name="Kubota M."/>
            <person name="Horikawa R."/>
            <person name="Utsumi A."/>
            <person name="Miura M."/>
            <person name="Ogawa S."/>
            <person name="Kanazawa M."/>
            <person name="Kohno Y."/>
            <person name="Inokuchi M."/>
            <person name="Hasegawa T."/>
            <person name="Narisawa K."/>
            <person name="Matsubara Y."/>
        </authorList>
    </citation>
    <scope>VARIANT GSD1B ARG-118</scope>
</reference>
<reference key="28">
    <citation type="journal article" date="2005" name="J. Korean Med. Sci.">
        <title>A novel mutation (A148V) in the glucose 6-phosphate translocase (SLC37A4) gene in a Korean patient with glycogen storage disease type 1b.</title>
        <authorList>
            <person name="Han S.H."/>
            <person name="Ki C.S."/>
            <person name="Lee J.E."/>
            <person name="Hong Y.J."/>
            <person name="Son B.K."/>
            <person name="Lee K.H."/>
            <person name="Choe Y.H."/>
            <person name="Lee S.Y."/>
            <person name="Kim J.W."/>
        </authorList>
    </citation>
    <scope>VARIANT GSD1B VAL-148</scope>
</reference>
<reference key="29">
    <citation type="journal article" date="2009" name="Pediatr. Neonatol.">
        <title>Glycogen storage disease type Ib: the first case in Taiwan.</title>
        <authorList>
            <person name="Hsiao H.J."/>
            <person name="Chang H.H."/>
            <person name="Hwu W.L."/>
            <person name="Lam C.W."/>
            <person name="Lee N.C."/>
            <person name="Chien Y.H."/>
        </authorList>
    </citation>
    <scope>VARIANT GSD1B ARG-246</scope>
</reference>
<reference key="30">
    <citation type="journal article" date="2011" name="J. Mol. Genet. Med.">
        <title>A novel mutation in SLC37A4 gene in a Sri Lankan boy with glycogen storage disease type Ib associated with very early onset neutropenia.</title>
        <authorList>
            <person name="Dissanayake V.H."/>
            <person name="Jayasinghe J.D."/>
            <person name="Thilakaratne V."/>
            <person name="Jayasekara R.W."/>
        </authorList>
    </citation>
    <scope>VARIANT GSD1B GLU-50</scope>
</reference>
<reference key="31">
    <citation type="journal article" date="2020" name="Mol. Genet. Metab. Rep.">
        <title>SLC37A4-CDG: Mislocalization of the glucose-6-phosphate transporter to the Golgi causes a new congenital disorder of glycosylation.</title>
        <authorList>
            <person name="Marquardt T."/>
            <person name="Bzduch V."/>
            <person name="Hogrebe M."/>
            <person name="Rust S."/>
            <person name="Reunert J."/>
            <person name="Grueneberg M."/>
            <person name="Park J."/>
            <person name="Callewaert N."/>
            <person name="Lachmann R."/>
            <person name="Wada Y."/>
            <person name="Engel T."/>
        </authorList>
    </citation>
    <scope>INVOLVEMENT IN CDG2W</scope>
    <scope>VARIANT CDG2W 423-ARG--GLU-429 DEL</scope>
    <scope>CHARACTERIZATION OF VARIANT CDG2W 423-ARG--GLU-429 DEL</scope>
    <scope>SUBCELLULAR LOCATION</scope>
</reference>
<reference key="32">
    <citation type="journal article" date="2021" name="Am. J. Hum. Genet.">
        <title>A mutation in SLC37A4 causes a dominantly inherited congenital disorder of glycosylation characterized by liver dysfunction.</title>
        <authorList>
            <consortium name="University of Washington Center for Mendelian Genomics (UW-CMG)"/>
            <person name="Ng B.G."/>
            <person name="Sosicka P."/>
            <person name="Fenaille F."/>
            <person name="Harroche A."/>
            <person name="Vuillaumier-Barrot S."/>
            <person name="Porterfield M."/>
            <person name="Xia Z.J."/>
            <person name="Wagner S."/>
            <person name="Bamshad M.J."/>
            <person name="Vergnes-Boiteux M.C."/>
            <person name="Cholet S."/>
            <person name="Dalton S."/>
            <person name="Dell A."/>
            <person name="Dupre T."/>
            <person name="Fiore M."/>
            <person name="Haslam S.M."/>
            <person name="Huguenin Y."/>
            <person name="Kumagai T."/>
            <person name="Kulik M."/>
            <person name="McGoogan K."/>
            <person name="Michot C."/>
            <person name="Nickerson D.A."/>
            <person name="Pascreau T."/>
            <person name="Borgel D."/>
            <person name="Raymond K."/>
            <person name="Warad D."/>
            <person name="Flanagan-Steet H."/>
            <person name="Steet R."/>
            <person name="Tiemeyer M."/>
            <person name="Seta N."/>
            <person name="Bruneel A."/>
            <person name="Freeze H.H."/>
        </authorList>
    </citation>
    <scope>INVOLVEMENT IN CDG2W</scope>
    <scope>CHARACTERIZATION OF VARIANT CDG2W 423-ARG--GLU-429 DEL</scope>
    <scope>SUBCELLULAR LOCATION</scope>
    <scope>FUNCTION</scope>
    <scope>TRANSPORTER ACTIVITY</scope>
</reference>
<reference key="33">
    <citation type="journal article" date="2021" name="JIMD Rep.">
        <title>SLC37A4-CDG: Second patient.</title>
        <authorList>
            <person name="Wilson M.P."/>
            <person name="Quelhas D."/>
            <person name="Leao-Teles E."/>
            <person name="Sturiale L."/>
            <person name="Rymen D."/>
            <person name="Keldermans L."/>
            <person name="Race V."/>
            <person name="Souche E."/>
            <person name="Rodrigues E."/>
            <person name="Campos T."/>
            <person name="Van Schaftingen E."/>
            <person name="Foulquier F."/>
            <person name="Garozzo D."/>
            <person name="Matthijs G."/>
            <person name="Jaeken J."/>
        </authorList>
    </citation>
    <scope>INVOLVEMENT IN CDG2W</scope>
    <scope>VARIANT CDG2W 423-ARG--GLU-429 DEL</scope>
</reference>
<name>G6PT1_HUMAN</name>
<organism>
    <name type="scientific">Homo sapiens</name>
    <name type="common">Human</name>
    <dbReference type="NCBI Taxonomy" id="9606"/>
    <lineage>
        <taxon>Eukaryota</taxon>
        <taxon>Metazoa</taxon>
        <taxon>Chordata</taxon>
        <taxon>Craniata</taxon>
        <taxon>Vertebrata</taxon>
        <taxon>Euteleostomi</taxon>
        <taxon>Mammalia</taxon>
        <taxon>Eutheria</taxon>
        <taxon>Euarchontoglires</taxon>
        <taxon>Primates</taxon>
        <taxon>Haplorrhini</taxon>
        <taxon>Catarrhini</taxon>
        <taxon>Hominidae</taxon>
        <taxon>Homo</taxon>
    </lineage>
</organism>
<evidence type="ECO:0000255" key="1"/>
<evidence type="ECO:0000269" key="2">
    <source>
    </source>
</evidence>
<evidence type="ECO:0000269" key="3">
    <source>
    </source>
</evidence>
<evidence type="ECO:0000269" key="4">
    <source>
    </source>
</evidence>
<evidence type="ECO:0000269" key="5">
    <source>
    </source>
</evidence>
<evidence type="ECO:0000269" key="6">
    <source>
    </source>
</evidence>
<evidence type="ECO:0000269" key="7">
    <source>
    </source>
</evidence>
<evidence type="ECO:0000269" key="8">
    <source>
    </source>
</evidence>
<evidence type="ECO:0000269" key="9">
    <source>
    </source>
</evidence>
<evidence type="ECO:0000269" key="10">
    <source>
    </source>
</evidence>
<evidence type="ECO:0000269" key="11">
    <source>
    </source>
</evidence>
<evidence type="ECO:0000269" key="12">
    <source>
    </source>
</evidence>
<evidence type="ECO:0000269" key="13">
    <source>
    </source>
</evidence>
<evidence type="ECO:0000269" key="14">
    <source>
    </source>
</evidence>
<evidence type="ECO:0000269" key="15">
    <source>
    </source>
</evidence>
<evidence type="ECO:0000269" key="16">
    <source>
    </source>
</evidence>
<evidence type="ECO:0000269" key="17">
    <source>
    </source>
</evidence>
<evidence type="ECO:0000269" key="18">
    <source>
    </source>
</evidence>
<evidence type="ECO:0000269" key="19">
    <source>
    </source>
</evidence>
<evidence type="ECO:0000269" key="20">
    <source>
    </source>
</evidence>
<evidence type="ECO:0000269" key="21">
    <source>
    </source>
</evidence>
<evidence type="ECO:0000269" key="22">
    <source>
    </source>
</evidence>
<evidence type="ECO:0000269" key="23">
    <source>
    </source>
</evidence>
<evidence type="ECO:0000269" key="24">
    <source>
    </source>
</evidence>
<evidence type="ECO:0000269" key="25">
    <source>
    </source>
</evidence>
<evidence type="ECO:0000269" key="26">
    <source ref="20"/>
</evidence>
<evidence type="ECO:0000303" key="27">
    <source>
    </source>
</evidence>
<evidence type="ECO:0000303" key="28">
    <source ref="5"/>
</evidence>
<evidence type="ECO:0000305" key="29"/>
<evidence type="ECO:0000305" key="30">
    <source>
    </source>
</evidence>
<evidence type="ECO:0000305" key="31">
    <source>
    </source>
</evidence>
<evidence type="ECO:0000312" key="32">
    <source>
        <dbReference type="EMBL" id="AAS00495.1"/>
    </source>
</evidence>
<evidence type="ECO:0000312" key="33">
    <source>
        <dbReference type="HGNC" id="HGNC:4061"/>
    </source>
</evidence>
<sequence>MAAQGYGYYRTVIFSAMFGGYSLYYFNRKTFSFVMPSLVEEIPLDKDDLGFITSSQSAAYAISKFVSGVLSDQMSARWLFSSGLLLVGLVNIFFAWSSTVPVFAALWFLNGLAQGLGWPPCGKVLRKWFEPSQFGTWWAILSTSMNLAGGLGPILATILAQSYSWRSTLALSGALCVVVSFLCLLLIHNEPADVGLRNLDPMPSEGKKGSLKEESTLQELLLSPYLWVLSTGYLVVFGVKTCCTDWGQFFLIQEKGQSALVGSSYMSALEVGGLVGSIAAGYLSDRAMAKAGLSNYGNPRHGLLLFMMAGMTVSMYLFRVTVTSDSPKLWILVLGAVFGFSSYGPIALFGVIANESAPPNLCGTSHAIVGLMANVGGFLAGLPFSTIAKHYSWSTAFWVAEVICAASTAAFFLLRNIRTKMGRVSKKAE</sequence>
<protein>
    <recommendedName>
        <fullName evidence="30 31">Glucose-6-phosphate exchanger SLC37A4</fullName>
    </recommendedName>
    <alternativeName>
        <fullName>Glucose-5-phosphate transporter</fullName>
    </alternativeName>
    <alternativeName>
        <fullName evidence="27">Glucose-6-phosphate translocase</fullName>
    </alternativeName>
    <alternativeName>
        <fullName evidence="33">Solute carrier family 37 member 4</fullName>
    </alternativeName>
    <alternativeName>
        <fullName evidence="32">Transformation-related gene 19 protein</fullName>
        <shortName evidence="32">TRG-19</shortName>
    </alternativeName>
</protein>
<feature type="chain" id="PRO_0000199891" description="Glucose-6-phosphate exchanger SLC37A4">
    <location>
        <begin position="1"/>
        <end position="429"/>
    </location>
</feature>
<feature type="transmembrane region" description="Helical" evidence="1">
    <location>
        <begin position="84"/>
        <end position="104"/>
    </location>
</feature>
<feature type="transmembrane region" description="Helical" evidence="1">
    <location>
        <begin position="105"/>
        <end position="125"/>
    </location>
</feature>
<feature type="transmembrane region" description="Helical" evidence="1">
    <location>
        <begin position="139"/>
        <end position="159"/>
    </location>
</feature>
<feature type="transmembrane region" description="Helical" evidence="1">
    <location>
        <begin position="167"/>
        <end position="187"/>
    </location>
</feature>
<feature type="transmembrane region" description="Helical" evidence="1">
    <location>
        <begin position="219"/>
        <end position="239"/>
    </location>
</feature>
<feature type="transmembrane region" description="Helical" evidence="1">
    <location>
        <begin position="260"/>
        <end position="280"/>
    </location>
</feature>
<feature type="transmembrane region" description="Helical" evidence="1">
    <location>
        <begin position="302"/>
        <end position="322"/>
    </location>
</feature>
<feature type="transmembrane region" description="Helical" evidence="1">
    <location>
        <begin position="329"/>
        <end position="349"/>
    </location>
</feature>
<feature type="transmembrane region" description="Helical" evidence="1">
    <location>
        <begin position="368"/>
        <end position="388"/>
    </location>
</feature>
<feature type="transmembrane region" description="Helical" evidence="1">
    <location>
        <begin position="394"/>
        <end position="414"/>
    </location>
</feature>
<feature type="splice variant" id="VSP_006171" description="In isoform 2." evidence="28">
    <original>K</original>
    <variation>KDVAFWTLALHPLAELTGFTEHE</variation>
    <location>
        <position position="328"/>
    </location>
</feature>
<feature type="sequence variant" id="VAR_025581" description="In GSD1B; dbSNP:rs193302881." evidence="23">
    <original>G</original>
    <variation>D</variation>
    <location>
        <position position="20"/>
    </location>
</feature>
<feature type="sequence variant" id="VAR_025582" description="In GSD1B; dbSNP:rs193302887." evidence="11">
    <original>Y</original>
    <variation>H</variation>
    <location>
        <position position="24"/>
    </location>
</feature>
<feature type="sequence variant" id="VAR_025583" description="In GSD1B; dbSNP:rs193302889." evidence="7">
    <original>N</original>
    <variation>K</variation>
    <location>
        <position position="27"/>
    </location>
</feature>
<feature type="sequence variant" id="VAR_025584" description="In GSD1B; dbSNP:rs193302882." evidence="23">
    <original>R</original>
    <variation>C</variation>
    <location>
        <position position="28"/>
    </location>
</feature>
<feature type="sequence variant" id="VAR_016840" description="In GSD1B; inactive glucose-6-phosphate transport; dbSNP:rs121908978." evidence="2 10">
    <original>R</original>
    <variation>H</variation>
    <location>
        <position position="28"/>
    </location>
</feature>
<feature type="sequence variant" id="VAR_066394" description="In GSD1B; dbSNP:rs193302877." evidence="16">
    <original>G</original>
    <variation>E</variation>
    <location>
        <position position="50"/>
    </location>
</feature>
<feature type="sequence variant" id="VAR_025585" description="In GSD1B; dbSNP:rs193302894." evidence="4">
    <original>G</original>
    <variation>R</variation>
    <location>
        <position position="50"/>
    </location>
</feature>
<feature type="sequence variant" id="VAR_025586" description="In GSD1B; dbSNP:rs193302898." evidence="9">
    <original>S</original>
    <variation>R</variation>
    <location>
        <position position="54"/>
    </location>
</feature>
<feature type="sequence variant" id="VAR_025587" description="In GSD1B; dbSNP:rs193302884." evidence="23">
    <original>S</original>
    <variation>R</variation>
    <location>
        <position position="55"/>
    </location>
</feature>
<feature type="sequence variant" id="VAR_025588" description="In GSD1B; dbSNP:rs193302885." evidence="23">
    <original>G</original>
    <variation>R</variation>
    <location>
        <position position="68"/>
    </location>
</feature>
<feature type="sequence variant" id="VAR_025589" description="In GSD1B; dbSNP:rs193302899." evidence="10">
    <original>L</original>
    <variation>P</variation>
    <location>
        <position position="85"/>
    </location>
</feature>
<feature type="sequence variant" id="VAR_025590" description="In GSD1B; dbSNP:rs193302886." evidence="23">
    <original>G</original>
    <variation>D</variation>
    <location>
        <position position="88"/>
    </location>
</feature>
<feature type="sequence variant" id="VAR_007850" description="In GSD1B; dbSNP:rs80356489." evidence="3 12 22 25">
    <original>W</original>
    <variation>R</variation>
    <location>
        <position position="118"/>
    </location>
</feature>
<feature type="sequence variant" id="VAR_025591" description="In GSD1C; dbSNP:rs193302896." evidence="4">
    <original>Q</original>
    <variation>P</variation>
    <location>
        <position position="133"/>
    </location>
</feature>
<feature type="sequence variant" id="VAR_066395" description="In GSD1B; dbSNP:rs193302879." evidence="14">
    <original>A</original>
    <variation>V</variation>
    <location>
        <position position="148"/>
    </location>
</feature>
<feature type="sequence variant" id="VAR_003184" description="In GSD1B; inactive glucose-6-phosphate transport; dbSNP:rs193302892." evidence="2 26">
    <original>G</original>
    <variation>E</variation>
    <location>
        <position position="149"/>
    </location>
</feature>
<feature type="sequence variant" id="VAR_025592" description="In GSD1B; dbSNP:rs193302883." evidence="23">
    <original>G</original>
    <variation>R</variation>
    <location>
        <position position="150"/>
    </location>
</feature>
<feature type="sequence variant" id="VAR_025593" description="In GSD1B; dbSNP:rs193302890." evidence="7">
    <original>P</original>
    <variation>L</variation>
    <location>
        <position position="153"/>
    </location>
</feature>
<feature type="sequence variant" id="VAR_025594" description="In GSD1B; dbSNP:rs193302895." evidence="4">
    <original>C</original>
    <variation>R</variation>
    <location>
        <position position="176"/>
    </location>
</feature>
<feature type="sequence variant" id="VAR_025595" description="In GSD1B; inactive glucose-6-phosphate transport; dbSNP:rs193302893." evidence="2 4">
    <original>C</original>
    <variation>R</variation>
    <location>
        <position position="183"/>
    </location>
</feature>
<feature type="sequence variant" id="VAR_032113" description="In GSD1B; dbSNP:rs193302888." evidence="6">
    <original>P</original>
    <variation>L</variation>
    <location>
        <position position="191"/>
    </location>
</feature>
<feature type="sequence variant" id="VAR_025596" description="In dbSNP:rs34203644." evidence="23">
    <original>N</original>
    <variation>I</variation>
    <location>
        <position position="198"/>
    </location>
</feature>
<feature type="sequence variant" id="VAR_025597" description="In GSD1B; dbSNP:rs193302902." evidence="13">
    <original>L</original>
    <variation>P</variation>
    <location>
        <position position="229"/>
    </location>
</feature>
<feature type="sequence variant" id="VAR_012356" description="In GSD1B." evidence="3">
    <location>
        <position position="235"/>
    </location>
</feature>
<feature type="sequence variant" id="VAR_066396" description="In GSD1B; dbSNP:rs193302878." evidence="15">
    <original>W</original>
    <variation>R</variation>
    <location>
        <position position="246"/>
    </location>
</feature>
<feature type="sequence variant" id="VAR_025598" description="In GSD1B; dbSNP:rs193302900." evidence="10">
    <original>I</original>
    <variation>N</variation>
    <location>
        <position position="278"/>
    </location>
</feature>
<feature type="sequence variant" id="VAR_066397" description="In GSD1B; dbSNP:rs193302880." evidence="4">
    <original>R</original>
    <variation>C</variation>
    <location>
        <position position="300"/>
    </location>
</feature>
<feature type="sequence variant" id="VAR_025599" description="In GSD1B; dbSNP:rs193302903." evidence="24">
    <original>R</original>
    <variation>H</variation>
    <location>
        <position position="300"/>
    </location>
</feature>
<feature type="sequence variant" id="VAR_025600" description="In GSD1B; dbSNP:rs193302891." evidence="7">
    <original>H</original>
    <variation>P</variation>
    <location>
        <position position="301"/>
    </location>
</feature>
<feature type="sequence variant" id="VAR_003185" description="In GSD1B; dbSNP:rs80356490." evidence="21">
    <original>G</original>
    <variation>C</variation>
    <location>
        <position position="339"/>
    </location>
</feature>
<feature type="sequence variant" id="VAR_025601" description="In GSD1B; dbSNP:rs121908980." evidence="8 10">
    <original>G</original>
    <variation>D</variation>
    <location>
        <position position="339"/>
    </location>
</feature>
<feature type="sequence variant" id="VAR_025602" description="In GSD1B; dbSNP:rs80356492." evidence="5">
    <original>A</original>
    <variation>T</variation>
    <location>
        <position position="367"/>
    </location>
</feature>
<feature type="sequence variant" id="VAR_025603" description="In GSD1B; dbSNP:rs193302901." evidence="10">
    <original>A</original>
    <variation>D</variation>
    <location>
        <position position="373"/>
    </location>
</feature>
<feature type="sequence variant" id="VAR_025604" description="In GSD1C; dbSNP:rs193302897." evidence="4">
    <original>G</original>
    <variation>S</variation>
    <location>
        <position position="376"/>
    </location>
</feature>
<feature type="sequence variant" id="VAR_086301" description="In CDG2W; affects the endoplasmic reticulum subcellular location, relocalizing the protein either to the Golgi apparatus, or to a distinct, non-Golgi compartment, possibly endoplasmic reticulum exit sites; when transfected into HepG2 cells, significantly changes the protein glycosylation pattern, such as that of transferrin; does not affect glucose-6-phosphate transport activity." evidence="18 19 20">
    <location>
        <begin position="423"/>
        <end position="429"/>
    </location>
</feature>
<feature type="sequence conflict" description="In Ref. 3; AAD19898." evidence="29" ref="3">
    <original>L</original>
    <variation>F</variation>
    <location>
        <position position="109"/>
    </location>
</feature>
<accession>O43826</accession>
<accession>O96016</accession>
<accession>Q5J7V4</accession>
<accession>Q9UI19</accession>
<accession>Q9UNS4</accession>
<dbReference type="EMBL" id="Y15409">
    <property type="protein sequence ID" value="CAA75608.1"/>
    <property type="molecule type" value="mRNA"/>
</dbReference>
<dbReference type="EMBL" id="AF078163">
    <property type="protein sequence ID" value="AAC72916.1"/>
    <property type="molecule type" value="Genomic_DNA"/>
</dbReference>
<dbReference type="EMBL" id="AF097831">
    <property type="protein sequence ID" value="AAD19898.1"/>
    <property type="molecule type" value="Genomic_DNA"/>
</dbReference>
<dbReference type="EMBL" id="AF111852">
    <property type="protein sequence ID" value="AAF16691.1"/>
    <property type="status" value="ALT_FRAME"/>
    <property type="molecule type" value="mRNA"/>
</dbReference>
<dbReference type="EMBL" id="AF110819">
    <property type="protein sequence ID" value="AAF37735.1"/>
    <property type="molecule type" value="mRNA"/>
</dbReference>
<dbReference type="EMBL" id="AF110820">
    <property type="protein sequence ID" value="AAF37736.1"/>
    <property type="molecule type" value="mRNA"/>
</dbReference>
<dbReference type="EMBL" id="Y17864">
    <property type="protein sequence ID" value="CAA76898.1"/>
    <property type="molecule type" value="Genomic_DNA"/>
</dbReference>
<dbReference type="EMBL" id="AF116864">
    <property type="protein sequence ID" value="AAD13111.1"/>
    <property type="molecule type" value="Genomic_DNA"/>
</dbReference>
<dbReference type="EMBL" id="AF116862">
    <property type="protein sequence ID" value="AAD13111.1"/>
    <property type="status" value="JOINED"/>
    <property type="molecule type" value="Genomic_DNA"/>
</dbReference>
<dbReference type="EMBL" id="AF116863">
    <property type="protein sequence ID" value="AAD13111.1"/>
    <property type="status" value="JOINED"/>
    <property type="molecule type" value="Genomic_DNA"/>
</dbReference>
<dbReference type="EMBL" id="AY423732">
    <property type="protein sequence ID" value="AAS00495.1"/>
    <property type="molecule type" value="mRNA"/>
</dbReference>
<dbReference type="EMBL" id="CH471065">
    <property type="protein sequence ID" value="EAW67432.1"/>
    <property type="molecule type" value="Genomic_DNA"/>
</dbReference>
<dbReference type="EMBL" id="BC002400">
    <property type="protein sequence ID" value="AAH02400.1"/>
    <property type="molecule type" value="mRNA"/>
</dbReference>
<dbReference type="EMBL" id="BC003589">
    <property type="protein sequence ID" value="AAH03589.1"/>
    <property type="molecule type" value="mRNA"/>
</dbReference>
<dbReference type="EMBL" id="BC014663">
    <property type="protein sequence ID" value="AAH14663.1"/>
    <property type="molecule type" value="mRNA"/>
</dbReference>
<dbReference type="EMBL" id="BC015650">
    <property type="protein sequence ID" value="AAH15650.1"/>
    <property type="molecule type" value="mRNA"/>
</dbReference>
<dbReference type="EMBL" id="BC064563">
    <property type="protein sequence ID" value="AAH64563.1"/>
    <property type="molecule type" value="mRNA"/>
</dbReference>
<dbReference type="RefSeq" id="NP_001157749.1">
    <molecule id="O43826-1"/>
    <property type="nucleotide sequence ID" value="NM_001164277.2"/>
</dbReference>
<dbReference type="RefSeq" id="NP_001157750.1">
    <molecule id="O43826-2"/>
    <property type="nucleotide sequence ID" value="NM_001164278.2"/>
</dbReference>
<dbReference type="RefSeq" id="NP_001157751.1">
    <property type="nucleotide sequence ID" value="NM_001164279.1"/>
</dbReference>
<dbReference type="RefSeq" id="NP_001157752.1">
    <molecule id="O43826-1"/>
    <property type="nucleotide sequence ID" value="NM_001164280.2"/>
</dbReference>
<dbReference type="RefSeq" id="NP_001458.1">
    <molecule id="O43826-1"/>
    <property type="nucleotide sequence ID" value="NM_001467.6"/>
</dbReference>
<dbReference type="SMR" id="O43826"/>
<dbReference type="BioGRID" id="108817">
    <property type="interactions" value="53"/>
</dbReference>
<dbReference type="FunCoup" id="O43826">
    <property type="interactions" value="117"/>
</dbReference>
<dbReference type="IntAct" id="O43826">
    <property type="interactions" value="43"/>
</dbReference>
<dbReference type="MINT" id="O43826"/>
<dbReference type="STRING" id="9606.ENSP00000476176"/>
<dbReference type="BindingDB" id="O43826"/>
<dbReference type="ChEMBL" id="CHEMBL3217398"/>
<dbReference type="TCDB" id="2.A.1.4.5">
    <property type="family name" value="the major facilitator superfamily (mfs)"/>
</dbReference>
<dbReference type="iPTMnet" id="O43826"/>
<dbReference type="PhosphoSitePlus" id="O43826"/>
<dbReference type="SwissPalm" id="O43826"/>
<dbReference type="BioMuta" id="SLC37A4"/>
<dbReference type="jPOST" id="O43826"/>
<dbReference type="MassIVE" id="O43826"/>
<dbReference type="PaxDb" id="9606-ENSP00000476176"/>
<dbReference type="ProteomicsDB" id="49192">
    <molecule id="O43826-1"/>
</dbReference>
<dbReference type="ProteomicsDB" id="49193">
    <molecule id="O43826-2"/>
</dbReference>
<dbReference type="Pumba" id="O43826"/>
<dbReference type="DNASU" id="2542"/>
<dbReference type="Ensembl" id="ENST00000642844.3">
    <molecule id="O43826-1"/>
    <property type="protein sequence ID" value="ENSP00000493469.1"/>
    <property type="gene ID" value="ENSG00000281500.5"/>
</dbReference>
<dbReference type="Ensembl" id="ENST00000710540.1">
    <molecule id="O43826-2"/>
    <property type="protein sequence ID" value="ENSP00000518334.1"/>
    <property type="gene ID" value="ENSG00000281500.5"/>
</dbReference>
<dbReference type="Ensembl" id="ENST00000710542.1">
    <molecule id="O43826-1"/>
    <property type="protein sequence ID" value="ENSP00000518335.1"/>
    <property type="gene ID" value="ENSG00000281500.5"/>
</dbReference>
<dbReference type="Ensembl" id="ENST00000710545.1">
    <molecule id="O43826-2"/>
    <property type="protein sequence ID" value="ENSP00000518336.1"/>
    <property type="gene ID" value="ENSG00000281500.5"/>
</dbReference>
<dbReference type="Ensembl" id="ENST00000710550.1">
    <molecule id="O43826-1"/>
    <property type="protein sequence ID" value="ENSP00000518339.1"/>
    <property type="gene ID" value="ENSG00000281500.5"/>
</dbReference>
<dbReference type="GeneID" id="2542"/>
<dbReference type="KEGG" id="hsa:2542"/>
<dbReference type="MANE-Select" id="ENST00000642844.3">
    <property type="protein sequence ID" value="ENSP00000493469.1"/>
    <property type="RefSeq nucleotide sequence ID" value="NM_001164277.2"/>
    <property type="RefSeq protein sequence ID" value="NP_001157749.1"/>
</dbReference>
<dbReference type="AGR" id="HGNC:4061"/>
<dbReference type="CTD" id="2542"/>
<dbReference type="DisGeNET" id="2542"/>
<dbReference type="GeneCards" id="SLC37A4"/>
<dbReference type="GeneReviews" id="SLC37A4"/>
<dbReference type="HGNC" id="HGNC:4061">
    <property type="gene designation" value="SLC37A4"/>
</dbReference>
<dbReference type="MalaCards" id="SLC37A4"/>
<dbReference type="MIM" id="232220">
    <property type="type" value="phenotype"/>
</dbReference>
<dbReference type="MIM" id="232240">
    <property type="type" value="phenotype"/>
</dbReference>
<dbReference type="MIM" id="602671">
    <property type="type" value="gene"/>
</dbReference>
<dbReference type="MIM" id="619525">
    <property type="type" value="phenotype"/>
</dbReference>
<dbReference type="neXtProt" id="NX_O43826"/>
<dbReference type="Orphanet" id="79259">
    <property type="disease" value="Glycogen storage disease due to glucose-6-phosphatase deficiency type Ib"/>
</dbReference>
<dbReference type="PharmGKB" id="PA28472"/>
<dbReference type="eggNOG" id="KOG2533">
    <property type="taxonomic scope" value="Eukaryota"/>
</dbReference>
<dbReference type="InParanoid" id="O43826"/>
<dbReference type="OrthoDB" id="3639251at2759"/>
<dbReference type="PAN-GO" id="O43826">
    <property type="GO annotations" value="4 GO annotations based on evolutionary models"/>
</dbReference>
<dbReference type="PhylomeDB" id="O43826"/>
<dbReference type="PathwayCommons" id="O43826"/>
<dbReference type="Reactome" id="R-HSA-3229133">
    <property type="pathway name" value="Glycogen storage disease type Ib (SLC37A4)"/>
</dbReference>
<dbReference type="Reactome" id="R-HSA-70263">
    <property type="pathway name" value="Gluconeogenesis"/>
</dbReference>
<dbReference type="SignaLink" id="O43826"/>
<dbReference type="BioGRID-ORCS" id="2542">
    <property type="hits" value="11 hits in 295 CRISPR screens"/>
</dbReference>
<dbReference type="ChiTaRS" id="SLC37A4">
    <property type="organism name" value="human"/>
</dbReference>
<dbReference type="GeneWiki" id="SLC37A4"/>
<dbReference type="GenomeRNAi" id="2542"/>
<dbReference type="Pharos" id="O43826">
    <property type="development level" value="Tchem"/>
</dbReference>
<dbReference type="PRO" id="PR:O43826"/>
<dbReference type="Proteomes" id="UP000005640">
    <property type="component" value="Unplaced"/>
</dbReference>
<dbReference type="RNAct" id="O43826">
    <property type="molecule type" value="protein"/>
</dbReference>
<dbReference type="GO" id="GO:0005783">
    <property type="term" value="C:endoplasmic reticulum"/>
    <property type="evidence" value="ECO:0000303"/>
    <property type="project" value="UniProtKB"/>
</dbReference>
<dbReference type="GO" id="GO:0005789">
    <property type="term" value="C:endoplasmic reticulum membrane"/>
    <property type="evidence" value="ECO:0000314"/>
    <property type="project" value="UniProtKB"/>
</dbReference>
<dbReference type="GO" id="GO:0016020">
    <property type="term" value="C:membrane"/>
    <property type="evidence" value="ECO:0007005"/>
    <property type="project" value="UniProtKB"/>
</dbReference>
<dbReference type="GO" id="GO:0061513">
    <property type="term" value="F:glucose 6-phosphate:phosphate antiporter activity"/>
    <property type="evidence" value="ECO:0000314"/>
    <property type="project" value="UniProtKB"/>
</dbReference>
<dbReference type="GO" id="GO:0015152">
    <property type="term" value="F:glucose-6-phosphate transmembrane transporter activity"/>
    <property type="evidence" value="ECO:0000314"/>
    <property type="project" value="UniProtKB"/>
</dbReference>
<dbReference type="GO" id="GO:0006094">
    <property type="term" value="P:gluconeogenesis"/>
    <property type="evidence" value="ECO:0000304"/>
    <property type="project" value="Reactome"/>
</dbReference>
<dbReference type="GO" id="GO:0042593">
    <property type="term" value="P:glucose homeostasis"/>
    <property type="evidence" value="ECO:0000314"/>
    <property type="project" value="UniProtKB"/>
</dbReference>
<dbReference type="GO" id="GO:0006006">
    <property type="term" value="P:glucose metabolic process"/>
    <property type="evidence" value="ECO:0000303"/>
    <property type="project" value="UniProtKB"/>
</dbReference>
<dbReference type="GO" id="GO:0015760">
    <property type="term" value="P:glucose-6-phosphate transport"/>
    <property type="evidence" value="ECO:0000314"/>
    <property type="project" value="UniProtKB"/>
</dbReference>
<dbReference type="GO" id="GO:0035435">
    <property type="term" value="P:phosphate ion transmembrane transport"/>
    <property type="evidence" value="ECO:0000314"/>
    <property type="project" value="UniProtKB"/>
</dbReference>
<dbReference type="CDD" id="cd17343">
    <property type="entry name" value="MFS_SLC37A4"/>
    <property type="match status" value="1"/>
</dbReference>
<dbReference type="FunFam" id="1.20.1250.20:FF:000112">
    <property type="entry name" value="glucose-6-phosphate exchanger SLC37A4 isoform X1"/>
    <property type="match status" value="1"/>
</dbReference>
<dbReference type="FunFam" id="1.20.1250.20:FF:000111">
    <property type="entry name" value="Solute carrier family 37 member 4"/>
    <property type="match status" value="1"/>
</dbReference>
<dbReference type="Gene3D" id="1.20.1250.20">
    <property type="entry name" value="MFS general substrate transporter like domains"/>
    <property type="match status" value="2"/>
</dbReference>
<dbReference type="InterPro" id="IPR011701">
    <property type="entry name" value="MFS"/>
</dbReference>
<dbReference type="InterPro" id="IPR020846">
    <property type="entry name" value="MFS_dom"/>
</dbReference>
<dbReference type="InterPro" id="IPR036259">
    <property type="entry name" value="MFS_trans_sf"/>
</dbReference>
<dbReference type="InterPro" id="IPR051337">
    <property type="entry name" value="OPA_Antiporter"/>
</dbReference>
<dbReference type="InterPro" id="IPR021159">
    <property type="entry name" value="Sugar-P_transporter_CS"/>
</dbReference>
<dbReference type="InterPro" id="IPR000849">
    <property type="entry name" value="Sugar_P_transporter"/>
</dbReference>
<dbReference type="NCBIfam" id="TIGR00881">
    <property type="entry name" value="2A0104"/>
    <property type="match status" value="1"/>
</dbReference>
<dbReference type="PANTHER" id="PTHR43826">
    <property type="entry name" value="GLUCOSE-6-PHOSPHATE EXCHANGER SLC37A4"/>
    <property type="match status" value="1"/>
</dbReference>
<dbReference type="PANTHER" id="PTHR43826:SF3">
    <property type="entry name" value="GLUCOSE-6-PHOSPHATE EXCHANGER SLC37A4"/>
    <property type="match status" value="1"/>
</dbReference>
<dbReference type="Pfam" id="PF07690">
    <property type="entry name" value="MFS_1"/>
    <property type="match status" value="1"/>
</dbReference>
<dbReference type="PIRSF" id="PIRSF002808">
    <property type="entry name" value="Hexose_phosphate_transp"/>
    <property type="match status" value="1"/>
</dbReference>
<dbReference type="SUPFAM" id="SSF103473">
    <property type="entry name" value="MFS general substrate transporter"/>
    <property type="match status" value="1"/>
</dbReference>
<dbReference type="PROSITE" id="PS00942">
    <property type="entry name" value="GLPT"/>
    <property type="match status" value="1"/>
</dbReference>
<dbReference type="PROSITE" id="PS50850">
    <property type="entry name" value="MFS"/>
    <property type="match status" value="1"/>
</dbReference>
<proteinExistence type="evidence at protein level"/>
<gene>
    <name evidence="33" type="primary">SLC37A4</name>
    <name type="synonym">G6PT</name>
    <name type="synonym">G6PT1</name>
    <name type="ORF">PRO0685</name>
    <name evidence="32" type="ORF">TRG19</name>
</gene>
<keyword id="KW-0025">Alternative splicing</keyword>
<keyword id="KW-0050">Antiport</keyword>
<keyword id="KW-0900">Congenital disorder of glycosylation</keyword>
<keyword id="KW-0225">Disease variant</keyword>
<keyword id="KW-0256">Endoplasmic reticulum</keyword>
<keyword id="KW-0322">Glycogen storage disease</keyword>
<keyword id="KW-0472">Membrane</keyword>
<keyword id="KW-1267">Proteomics identification</keyword>
<keyword id="KW-1185">Reference proteome</keyword>
<keyword id="KW-0762">Sugar transport</keyword>
<keyword id="KW-0812">Transmembrane</keyword>
<keyword id="KW-1133">Transmembrane helix</keyword>
<keyword id="KW-0813">Transport</keyword>
<comment type="function">
    <text evidence="2 17 20">Inorganic phosphate and glucose-6-phosphate antiporter of the endoplasmic reticulum. Transports cytoplasmic glucose-6-phosphate into the lumen of the endoplasmic reticulum and translocates inorganic phosphate into the opposite direction (PubMed:33964207). Forms with glucose-6-phosphatase the complex responsible for glucose production through glycogenolysis and gluconeogenesis. Hence, it plays a central role in homeostatic regulation of blood glucose levels.</text>
</comment>
<comment type="catalytic activity">
    <reaction evidence="2 17 20">
        <text>D-glucose 6-phosphate(in) + phosphate(out) = D-glucose 6-phosphate(out) + phosphate(in)</text>
        <dbReference type="Rhea" id="RHEA:71535"/>
        <dbReference type="ChEBI" id="CHEBI:43474"/>
        <dbReference type="ChEBI" id="CHEBI:61548"/>
    </reaction>
</comment>
<comment type="activity regulation">
    <text evidence="17">Inhibited by vanadate and chlorogenic acid.</text>
</comment>
<comment type="interaction">
    <interactant intactId="EBI-6269684">
        <id>O43826</id>
    </interactant>
    <interactant intactId="EBI-700794">
        <id>Q13323</id>
        <label>BIK</label>
    </interactant>
    <organismsDiffer>false</organismsDiffer>
    <experiments>3</experiments>
</comment>
<comment type="subcellular location">
    <subcellularLocation>
        <location evidence="17 18 20">Endoplasmic reticulum membrane</location>
        <topology evidence="1">Multi-pass membrane protein</topology>
    </subcellularLocation>
</comment>
<comment type="alternative products">
    <event type="alternative splicing"/>
    <isoform>
        <id>O43826-1</id>
        <name>1</name>
        <sequence type="displayed"/>
    </isoform>
    <isoform>
        <id>O43826-2</id>
        <name>2</name>
        <sequence type="described" ref="VSP_006171"/>
    </isoform>
</comment>
<comment type="tissue specificity">
    <text>Mostly expressed in liver and kidney.</text>
</comment>
<comment type="disease" evidence="2 3 4 5 6 7 8 9 10 11 12 13 14 15 16 21 22 23 24 25 26">
    <disease id="DI-00519">
        <name>Glycogen storage disease 1B</name>
        <acronym>GSD1B</acronym>
        <description>A metabolic disorder characterized by impairment of terminal steps of glycogenolysis and gluconeogenesis. Patients manifest a wide range of clinical symptoms and biochemical abnormalities, including hypoglycemia, severe hepatomegaly due to excessive accumulation of glycogen, kidney enlargement, growth retardation, lactic acidemia, hyperlipidemia, and hyperuricemia. Glycogen storage disease type 1B patients also present a tendency towards infections associated with neutropenia, relapsing aphthous gingivostomatitis, and inflammatory bowel disease.</description>
        <dbReference type="MIM" id="232220"/>
    </disease>
    <text>The disease is caused by variants affecting the gene represented in this entry.</text>
</comment>
<comment type="disease" evidence="23">
    <disease id="DI-00520">
        <name>Glycogen storage disease 1C</name>
        <acronym>GSD1C</acronym>
        <description>A metabolic disorder characterized by impairment of terminal steps of glycogenolysis and gluconeogenesis. Patients manifest a wide range of clinical symptoms and biochemical abnormalities, including hypoglycemia, severe hepatomegaly due to excessive accumulation of glycogen, kidney enlargement, growth retardation, lactic acidemia, hyperlipidemia, and hyperuricemia.</description>
        <dbReference type="MIM" id="232240"/>
    </disease>
    <text>The disease is caused by variants affecting the gene represented in this entry.</text>
</comment>
<comment type="disease" evidence="23">
    <disease id="DI-00521">
        <name>Glycogen storage disease 1D</name>
        <acronym>GSD1D</acronym>
        <description>A metabolic disorder characterized by impairment of terminal steps of glycogenolysis and gluconeogenesis. Patients manifest a wide range of clinical symptoms and biochemical abnormalities, including hypoglycemia, severe hepatomegaly due to excessive accumulation of glycogen, kidney enlargement, growth retardation, lactic acidemia, hyperlipidemia, and hyperuricemia.</description>
        <dbReference type="MIM" id="232240"/>
    </disease>
    <text>The disease is caused by variants affecting the gene represented in this entry.</text>
</comment>
<comment type="disease" evidence="18 19 20">
    <disease id="DI-06226">
        <name>Congenital disorder of glycosylation 2W</name>
        <acronym>CDG2W</acronym>
        <description>A form of congenital disorder of glycosylation, a genetically heterogeneous group of multisystem disorders caused by a defect in glycoprotein biosynthesis and characterized by under-glycosylated serum glycoproteins. Congenital disorders of glycosylation result in a wide variety of clinical features, such as defects in the nervous system development, psychomotor retardation, dysmorphic features, hypotonia, coagulation disorders, and immunodeficiency. The broad spectrum of features reflects the critical role of N-glycoproteins during embryonic development, differentiation, and maintenance of cell functions. CDG2W is an autosomal dominant disorder characterized by liver dysfunction and coagulation deficiencies.</description>
        <dbReference type="MIM" id="619525"/>
    </disease>
    <text>The disease is caused by variants affecting the gene represented in this entry.</text>
</comment>
<comment type="similarity">
    <text evidence="29">Belongs to the major facilitator superfamily. Organophosphate:Pi antiporter (OPA) (TC 2.A.1.4) family.</text>
</comment>
<comment type="sequence caution" evidence="29">
    <conflict type="frameshift">
        <sequence resource="EMBL-CDS" id="AAF16691"/>
    </conflict>
</comment>
<comment type="online information" name="Mendelian genes solute carrier family 37 (glucose-6-phosphate transporter), member 4 (SLC37A4)">
    <link uri="https://databases.lovd.nl/shared/genes/SLC37A4"/>
    <text>Leiden Open Variation Database (LOVD)</text>
</comment>